<name>PDUF_SALTY</name>
<comment type="function">
    <text evidence="7 8 9">Probably facilitates diffusion of 1,2-propanediol (1,2-PD) into the cell (Probable). Modeling suggests active transport of 1,2-PD is required at low extracellular concentrations to allow maximal growth and saturation of PduP/PduQ within the bacterial microcompartment (BMC); this protein may be the cellular transporter (Probable).</text>
</comment>
<comment type="function">
    <text evidence="8">The 1,2-PD-specific bacterial microcompartment (BMC) concentrates low levels of 1,2-PD catabolic enzymes, concentrates volatile reaction intermediates thus enhancing pathway flux and keeps the level of toxic, mutagenic propionaldehyde low.</text>
</comment>
<comment type="subcellular location">
    <subcellularLocation>
        <location evidence="6">Cell inner membrane</location>
        <topology evidence="1">Multi-pass membrane protein</topology>
    </subcellularLocation>
</comment>
<comment type="induction">
    <text evidence="2">By propanediol aerobically and anaerobically, under control of PocR, Arc and Crp. Has 2 promoters.</text>
</comment>
<comment type="domain">
    <text evidence="9">Aquaporins contain two tandem repeats each containing three membrane-spanning domains and a pore-forming loop with the signature motif Asn-Pro-Ala (NPA).</text>
</comment>
<comment type="disruption phenotype">
    <text evidence="2 3 4">No visible phenotype, not required for BMC formation (PubMed:8071226, PubMed:9352910). Reduced levels of PocR protein; pocR is transcribed in part from the pduF promoters (PubMed:7559322).</text>
</comment>
<comment type="similarity">
    <text evidence="6">Belongs to the MIP/aquaporin (TC 1.A.8) family.</text>
</comment>
<organism>
    <name type="scientific">Salmonella typhimurium (strain LT2 / SGSC1412 / ATCC 700720)</name>
    <dbReference type="NCBI Taxonomy" id="99287"/>
    <lineage>
        <taxon>Bacteria</taxon>
        <taxon>Pseudomonadati</taxon>
        <taxon>Pseudomonadota</taxon>
        <taxon>Gammaproteobacteria</taxon>
        <taxon>Enterobacterales</taxon>
        <taxon>Enterobacteriaceae</taxon>
        <taxon>Salmonella</taxon>
    </lineage>
</organism>
<proteinExistence type="evidence at transcript level"/>
<protein>
    <recommendedName>
        <fullName evidence="5">Propanediol uptake facilitator PduF</fullName>
    </recommendedName>
</protein>
<keyword id="KW-0997">Cell inner membrane</keyword>
<keyword id="KW-1003">Cell membrane</keyword>
<keyword id="KW-0472">Membrane</keyword>
<keyword id="KW-1185">Reference proteome</keyword>
<keyword id="KW-0677">Repeat</keyword>
<keyword id="KW-0812">Transmembrane</keyword>
<keyword id="KW-1133">Transmembrane helix</keyword>
<keyword id="KW-0813">Transport</keyword>
<feature type="chain" id="PRO_0000064095" description="Propanediol uptake facilitator PduF">
    <location>
        <begin position="1"/>
        <end position="264"/>
    </location>
</feature>
<feature type="transmembrane region" description="Helical" evidence="1">
    <location>
        <begin position="10"/>
        <end position="30"/>
    </location>
</feature>
<feature type="transmembrane region" description="Helical" evidence="1">
    <location>
        <begin position="42"/>
        <end position="62"/>
    </location>
</feature>
<feature type="transmembrane region" description="Helical" evidence="1">
    <location>
        <begin position="84"/>
        <end position="104"/>
    </location>
</feature>
<feature type="transmembrane region" description="Helical" evidence="1">
    <location>
        <begin position="143"/>
        <end position="163"/>
    </location>
</feature>
<feature type="transmembrane region" description="Helical" evidence="1">
    <location>
        <begin position="179"/>
        <end position="199"/>
    </location>
</feature>
<feature type="transmembrane region" description="Helical" evidence="1">
    <location>
        <begin position="228"/>
        <end position="248"/>
    </location>
</feature>
<feature type="short sequence motif" description="NPA 1" evidence="3">
    <location>
        <begin position="66"/>
        <end position="68"/>
    </location>
</feature>
<feature type="short sequence motif" description="NPA 2" evidence="3">
    <location>
        <begin position="201"/>
        <end position="203"/>
    </location>
</feature>
<feature type="sequence conflict" description="In Ref. 1; AAB84108." evidence="6" ref="1">
    <original>R</original>
    <variation>A</variation>
    <location>
        <position position="121"/>
    </location>
</feature>
<feature type="sequence conflict" description="In Ref. 1; AAB84108." evidence="6" ref="1">
    <original>APLLI</original>
    <variation>RLCLL</variation>
    <location>
        <begin position="177"/>
        <end position="181"/>
    </location>
</feature>
<evidence type="ECO:0000255" key="1"/>
<evidence type="ECO:0000269" key="2">
    <source>
    </source>
</evidence>
<evidence type="ECO:0000269" key="3">
    <source>
    </source>
</evidence>
<evidence type="ECO:0000269" key="4">
    <source>
    </source>
</evidence>
<evidence type="ECO:0000303" key="5">
    <source>
    </source>
</evidence>
<evidence type="ECO:0000305" key="6"/>
<evidence type="ECO:0000305" key="7">
    <source>
    </source>
</evidence>
<evidence type="ECO:0000305" key="8">
    <source>
    </source>
</evidence>
<evidence type="ECO:0000305" key="9">
    <source>
    </source>
</evidence>
<dbReference type="EMBL" id="AF026270">
    <property type="protein sequence ID" value="AAB84108.1"/>
    <property type="molecule type" value="Genomic_DNA"/>
</dbReference>
<dbReference type="EMBL" id="AE006468">
    <property type="protein sequence ID" value="AAL20941.1"/>
    <property type="molecule type" value="Genomic_DNA"/>
</dbReference>
<dbReference type="RefSeq" id="NP_460982.1">
    <property type="nucleotide sequence ID" value="NC_003197.2"/>
</dbReference>
<dbReference type="RefSeq" id="WP_001000023.1">
    <property type="nucleotide sequence ID" value="NC_003197.2"/>
</dbReference>
<dbReference type="SMR" id="P37451"/>
<dbReference type="STRING" id="99287.STM2037"/>
<dbReference type="PaxDb" id="99287-STM2037"/>
<dbReference type="GeneID" id="1253558"/>
<dbReference type="KEGG" id="stm:STM2037"/>
<dbReference type="PATRIC" id="fig|99287.12.peg.2159"/>
<dbReference type="HOGENOM" id="CLU_020019_9_3_6"/>
<dbReference type="PhylomeDB" id="P37451"/>
<dbReference type="BioCyc" id="SENT99287:STM2037-MONOMER"/>
<dbReference type="Proteomes" id="UP000001014">
    <property type="component" value="Chromosome"/>
</dbReference>
<dbReference type="GO" id="GO:0005886">
    <property type="term" value="C:plasma membrane"/>
    <property type="evidence" value="ECO:0000318"/>
    <property type="project" value="GO_Central"/>
</dbReference>
<dbReference type="GO" id="GO:0015254">
    <property type="term" value="F:glycerol channel activity"/>
    <property type="evidence" value="ECO:0000318"/>
    <property type="project" value="GO_Central"/>
</dbReference>
<dbReference type="GO" id="GO:0015793">
    <property type="term" value="P:glycerol transmembrane transport"/>
    <property type="evidence" value="ECO:0000318"/>
    <property type="project" value="GO_Central"/>
</dbReference>
<dbReference type="CDD" id="cd00333">
    <property type="entry name" value="MIP"/>
    <property type="match status" value="1"/>
</dbReference>
<dbReference type="Gene3D" id="1.20.1080.10">
    <property type="entry name" value="Glycerol uptake facilitator protein"/>
    <property type="match status" value="1"/>
</dbReference>
<dbReference type="InterPro" id="IPR023271">
    <property type="entry name" value="Aquaporin-like"/>
</dbReference>
<dbReference type="InterPro" id="IPR000425">
    <property type="entry name" value="MIP"/>
</dbReference>
<dbReference type="InterPro" id="IPR050363">
    <property type="entry name" value="MIP/Aquaporin"/>
</dbReference>
<dbReference type="InterPro" id="IPR022357">
    <property type="entry name" value="MIP_CS"/>
</dbReference>
<dbReference type="NCBIfam" id="TIGR00861">
    <property type="entry name" value="MIP"/>
    <property type="match status" value="1"/>
</dbReference>
<dbReference type="PANTHER" id="PTHR43829">
    <property type="entry name" value="AQUAPORIN OR AQUAGLYCEROPORIN RELATED"/>
    <property type="match status" value="1"/>
</dbReference>
<dbReference type="PANTHER" id="PTHR43829:SF9">
    <property type="entry name" value="AQUAPORIN-9"/>
    <property type="match status" value="1"/>
</dbReference>
<dbReference type="Pfam" id="PF00230">
    <property type="entry name" value="MIP"/>
    <property type="match status" value="1"/>
</dbReference>
<dbReference type="PRINTS" id="PR00783">
    <property type="entry name" value="MINTRINSICP"/>
</dbReference>
<dbReference type="SUPFAM" id="SSF81338">
    <property type="entry name" value="Aquaporin-like"/>
    <property type="match status" value="1"/>
</dbReference>
<dbReference type="PROSITE" id="PS00221">
    <property type="entry name" value="MIP"/>
    <property type="match status" value="1"/>
</dbReference>
<sequence length="264" mass="27744">MNDSLKAQCGAEFLGTGLFLFFGIGCLSALKVAGASLGLWEICIIWGLGISLAVYLTAGISGGHLNPAVTIALWLFACFPKQKVLPYIIAQFAGAFGGALLAYVLYSSLFTEFETAHHMVRGSVESLQLASIFSTYPAAALNVWQAALVEVVITSILMGMIMALTDDGNGIPKGPLAPLLIGILVAVIGASTGPLTGFAMNPARDFGPKLFTWLAGWGNMAMSGGREIPYFIVPIVAPVIGACAGAAIYRYFIGKNLPCNRCEL</sequence>
<reference key="1">
    <citation type="journal article" date="1994" name="J. Bacteriol.">
        <title>The control region of the pdu/cob regulon in Salmonella typhimurium.</title>
        <authorList>
            <person name="Chen P."/>
            <person name="Anderson D.I."/>
            <person name="Roth J.R."/>
        </authorList>
    </citation>
    <scope>NUCLEOTIDE SEQUENCE [GENOMIC DNA]</scope>
    <scope>POSSIBLE FUNCTION</scope>
    <scope>MOTIF</scope>
    <scope>DISRUPTION PHENOTYPE</scope>
    <source>
        <strain>LT2</strain>
    </source>
</reference>
<reference key="2">
    <citation type="journal article" date="1997" name="J. Bacteriol.">
        <title>Propanediol utilization genes (pdu) of Salmonella typhimurium: three genes for the propanediol dehydratase.</title>
        <authorList>
            <person name="Bobik T.A."/>
            <person name="Xu Y."/>
            <person name="Jeter R.M."/>
            <person name="Otto K.E."/>
            <person name="Roth J.R."/>
        </authorList>
    </citation>
    <scope>NUCLEOTIDE SEQUENCE [GENOMIC DNA]</scope>
    <scope>DISRUPTION PHENOTYPE</scope>
    <source>
        <strain>LT2</strain>
    </source>
</reference>
<reference key="3">
    <citation type="journal article" date="1999" name="J. Bacteriol.">
        <title>The propanediol utilization (pdu) operon of Salmonella enterica serovar typhimurium LT2 includes genes necessary for formation of polyhedral organelles involved in coenzyme B(12)-dependent 1, 2-propanediol degradation.</title>
        <authorList>
            <person name="Bobik T.A."/>
            <person name="Havemann G.D."/>
            <person name="Busch R.J."/>
            <person name="Williams D.S."/>
            <person name="Aldrich H.C."/>
        </authorList>
    </citation>
    <scope>NUCLEOTIDE SEQUENCE [GENOMIC DNA]</scope>
    <source>
        <strain>LT2</strain>
    </source>
</reference>
<reference key="4">
    <citation type="journal article" date="2001" name="Nature">
        <title>Complete genome sequence of Salmonella enterica serovar Typhimurium LT2.</title>
        <authorList>
            <person name="McClelland M."/>
            <person name="Sanderson K.E."/>
            <person name="Spieth J."/>
            <person name="Clifton S.W."/>
            <person name="Latreille P."/>
            <person name="Courtney L."/>
            <person name="Porwollik S."/>
            <person name="Ali J."/>
            <person name="Dante M."/>
            <person name="Du F."/>
            <person name="Hou S."/>
            <person name="Layman D."/>
            <person name="Leonard S."/>
            <person name="Nguyen C."/>
            <person name="Scott K."/>
            <person name="Holmes A."/>
            <person name="Grewal N."/>
            <person name="Mulvaney E."/>
            <person name="Ryan E."/>
            <person name="Sun H."/>
            <person name="Florea L."/>
            <person name="Miller W."/>
            <person name="Stoneking T."/>
            <person name="Nhan M."/>
            <person name="Waterston R."/>
            <person name="Wilson R.K."/>
        </authorList>
    </citation>
    <scope>NUCLEOTIDE SEQUENCE [LARGE SCALE GENOMIC DNA]</scope>
    <source>
        <strain>LT2 / SGSC1412 / ATCC 700720</strain>
    </source>
</reference>
<reference key="5">
    <citation type="journal article" date="1995" name="J. Bacteriol.">
        <title>Five promoters integrate control of the cob/pdu regulon in Salmonella typhimurium.</title>
        <authorList>
            <person name="Chen P."/>
            <person name="Ailion M."/>
            <person name="Bobik T."/>
            <person name="Stormo G."/>
            <person name="Roth J."/>
        </authorList>
    </citation>
    <scope>PROBABLE FUNCTION</scope>
    <scope>INDUCTION BY PROPANEDIOL</scope>
    <source>
        <strain>LT2</strain>
    </source>
</reference>
<reference key="6">
    <citation type="journal article" date="2017" name="PLoS Comput. Biol.">
        <title>A systems-level model reveals that 1,2-Propanediol utilization microcompartments enhance pathway flux through intermediate sequestration.</title>
        <authorList>
            <person name="Jakobson C.M."/>
            <person name="Tullman-Ercek D."/>
            <person name="Slininger M.F."/>
            <person name="Mangan N.M."/>
        </authorList>
    </citation>
    <scope>SYSTEM-MODELING</scope>
    <scope>POSSIBLE FUNCTION</scope>
    <source>
        <strain>LT2</strain>
    </source>
</reference>
<gene>
    <name evidence="5" type="primary">pduF</name>
    <name type="ordered locus">STM2037</name>
</gene>
<accession>P37451</accession>